<feature type="chain" id="PRO_1000043738" description="GTP cyclohydrolase 1">
    <location>
        <begin position="1"/>
        <end position="222"/>
    </location>
</feature>
<feature type="binding site" evidence="2">
    <location>
        <position position="111"/>
    </location>
    <ligand>
        <name>Zn(2+)</name>
        <dbReference type="ChEBI" id="CHEBI:29105"/>
    </ligand>
</feature>
<feature type="binding site" evidence="2">
    <location>
        <position position="114"/>
    </location>
    <ligand>
        <name>Zn(2+)</name>
        <dbReference type="ChEBI" id="CHEBI:29105"/>
    </ligand>
</feature>
<feature type="binding site" evidence="2">
    <location>
        <position position="182"/>
    </location>
    <ligand>
        <name>Zn(2+)</name>
        <dbReference type="ChEBI" id="CHEBI:29105"/>
    </ligand>
</feature>
<keyword id="KW-0342">GTP-binding</keyword>
<keyword id="KW-0378">Hydrolase</keyword>
<keyword id="KW-0479">Metal-binding</keyword>
<keyword id="KW-0547">Nucleotide-binding</keyword>
<keyword id="KW-0554">One-carbon metabolism</keyword>
<keyword id="KW-0862">Zinc</keyword>
<proteinExistence type="inferred from homology"/>
<gene>
    <name evidence="2" type="primary">folE</name>
    <name type="ordered locus">SBO_2174</name>
</gene>
<comment type="catalytic activity">
    <reaction evidence="2">
        <text>GTP + H2O = 7,8-dihydroneopterin 3'-triphosphate + formate + H(+)</text>
        <dbReference type="Rhea" id="RHEA:17473"/>
        <dbReference type="ChEBI" id="CHEBI:15377"/>
        <dbReference type="ChEBI" id="CHEBI:15378"/>
        <dbReference type="ChEBI" id="CHEBI:15740"/>
        <dbReference type="ChEBI" id="CHEBI:37565"/>
        <dbReference type="ChEBI" id="CHEBI:58462"/>
        <dbReference type="EC" id="3.5.4.16"/>
    </reaction>
</comment>
<comment type="pathway">
    <text evidence="2">Cofactor biosynthesis; 7,8-dihydroneopterin triphosphate biosynthesis; 7,8-dihydroneopterin triphosphate from GTP: step 1/1.</text>
</comment>
<comment type="subunit">
    <text evidence="1">Toroid-shaped homodecamer, composed of two pentamers of five dimers.</text>
</comment>
<comment type="similarity">
    <text evidence="2">Belongs to the GTP cyclohydrolase I family.</text>
</comment>
<evidence type="ECO:0000250" key="1"/>
<evidence type="ECO:0000255" key="2">
    <source>
        <dbReference type="HAMAP-Rule" id="MF_00223"/>
    </source>
</evidence>
<dbReference type="EC" id="3.5.4.16" evidence="2"/>
<dbReference type="EMBL" id="CP000036">
    <property type="protein sequence ID" value="ABB66747.1"/>
    <property type="molecule type" value="Genomic_DNA"/>
</dbReference>
<dbReference type="RefSeq" id="WP_001139613.1">
    <property type="nucleotide sequence ID" value="NC_007613.1"/>
</dbReference>
<dbReference type="SMR" id="Q31YW1"/>
<dbReference type="GeneID" id="93775029"/>
<dbReference type="KEGG" id="sbo:SBO_2174"/>
<dbReference type="HOGENOM" id="CLU_049768_3_2_6"/>
<dbReference type="UniPathway" id="UPA00848">
    <property type="reaction ID" value="UER00151"/>
</dbReference>
<dbReference type="Proteomes" id="UP000007067">
    <property type="component" value="Chromosome"/>
</dbReference>
<dbReference type="GO" id="GO:0005737">
    <property type="term" value="C:cytoplasm"/>
    <property type="evidence" value="ECO:0007669"/>
    <property type="project" value="TreeGrafter"/>
</dbReference>
<dbReference type="GO" id="GO:0005525">
    <property type="term" value="F:GTP binding"/>
    <property type="evidence" value="ECO:0007669"/>
    <property type="project" value="UniProtKB-KW"/>
</dbReference>
<dbReference type="GO" id="GO:0003934">
    <property type="term" value="F:GTP cyclohydrolase I activity"/>
    <property type="evidence" value="ECO:0007669"/>
    <property type="project" value="UniProtKB-UniRule"/>
</dbReference>
<dbReference type="GO" id="GO:0008270">
    <property type="term" value="F:zinc ion binding"/>
    <property type="evidence" value="ECO:0007669"/>
    <property type="project" value="UniProtKB-UniRule"/>
</dbReference>
<dbReference type="GO" id="GO:0006730">
    <property type="term" value="P:one-carbon metabolic process"/>
    <property type="evidence" value="ECO:0007669"/>
    <property type="project" value="UniProtKB-UniRule"/>
</dbReference>
<dbReference type="GO" id="GO:0006729">
    <property type="term" value="P:tetrahydrobiopterin biosynthetic process"/>
    <property type="evidence" value="ECO:0007669"/>
    <property type="project" value="TreeGrafter"/>
</dbReference>
<dbReference type="GO" id="GO:0046654">
    <property type="term" value="P:tetrahydrofolate biosynthetic process"/>
    <property type="evidence" value="ECO:0007669"/>
    <property type="project" value="UniProtKB-UniRule"/>
</dbReference>
<dbReference type="CDD" id="cd00642">
    <property type="entry name" value="GTP_cyclohydro1"/>
    <property type="match status" value="1"/>
</dbReference>
<dbReference type="FunFam" id="1.10.286.10:FF:000002">
    <property type="entry name" value="GTP cyclohydrolase 1"/>
    <property type="match status" value="1"/>
</dbReference>
<dbReference type="FunFam" id="3.30.1130.10:FF:000001">
    <property type="entry name" value="GTP cyclohydrolase 1"/>
    <property type="match status" value="1"/>
</dbReference>
<dbReference type="Gene3D" id="1.10.286.10">
    <property type="match status" value="1"/>
</dbReference>
<dbReference type="Gene3D" id="3.30.1130.10">
    <property type="match status" value="1"/>
</dbReference>
<dbReference type="HAMAP" id="MF_00223">
    <property type="entry name" value="FolE"/>
    <property type="match status" value="1"/>
</dbReference>
<dbReference type="InterPro" id="IPR043133">
    <property type="entry name" value="GTP-CH-I_C/QueF"/>
</dbReference>
<dbReference type="InterPro" id="IPR043134">
    <property type="entry name" value="GTP-CH-I_N"/>
</dbReference>
<dbReference type="InterPro" id="IPR001474">
    <property type="entry name" value="GTP_CycHdrlase_I"/>
</dbReference>
<dbReference type="InterPro" id="IPR018234">
    <property type="entry name" value="GTP_CycHdrlase_I_CS"/>
</dbReference>
<dbReference type="InterPro" id="IPR020602">
    <property type="entry name" value="GTP_CycHdrlase_I_dom"/>
</dbReference>
<dbReference type="NCBIfam" id="TIGR00063">
    <property type="entry name" value="folE"/>
    <property type="match status" value="1"/>
</dbReference>
<dbReference type="NCBIfam" id="NF006824">
    <property type="entry name" value="PRK09347.1-1"/>
    <property type="match status" value="1"/>
</dbReference>
<dbReference type="NCBIfam" id="NF006826">
    <property type="entry name" value="PRK09347.1-3"/>
    <property type="match status" value="1"/>
</dbReference>
<dbReference type="PANTHER" id="PTHR11109:SF7">
    <property type="entry name" value="GTP CYCLOHYDROLASE 1"/>
    <property type="match status" value="1"/>
</dbReference>
<dbReference type="PANTHER" id="PTHR11109">
    <property type="entry name" value="GTP CYCLOHYDROLASE I"/>
    <property type="match status" value="1"/>
</dbReference>
<dbReference type="Pfam" id="PF01227">
    <property type="entry name" value="GTP_cyclohydroI"/>
    <property type="match status" value="1"/>
</dbReference>
<dbReference type="SUPFAM" id="SSF55620">
    <property type="entry name" value="Tetrahydrobiopterin biosynthesis enzymes-like"/>
    <property type="match status" value="1"/>
</dbReference>
<dbReference type="PROSITE" id="PS00859">
    <property type="entry name" value="GTP_CYCLOHYDROL_1_1"/>
    <property type="match status" value="1"/>
</dbReference>
<dbReference type="PROSITE" id="PS00860">
    <property type="entry name" value="GTP_CYCLOHYDROL_1_2"/>
    <property type="match status" value="1"/>
</dbReference>
<sequence length="222" mass="24831">MPSLSKEAALVHEALVARGLETPLRPPVHEMDNETRKSLIAGHMTEIMQLLNLDLADDSLMETPHRIAKMYVDEIFSGLDYANFPKITLIENKMKVDEMVTVRDITLTSTCEHHFVTIDGKATVAYIPKDSVIGLSKINRIVQFFAQRPQVQERLTQQILIALQTLLGTNNVAVSIDAVHYCVKARGIRDATSATTTTSLGGLFKSSQNTRHEFLRAVRHHN</sequence>
<name>GCH1_SHIBS</name>
<organism>
    <name type="scientific">Shigella boydii serotype 4 (strain Sb227)</name>
    <dbReference type="NCBI Taxonomy" id="300268"/>
    <lineage>
        <taxon>Bacteria</taxon>
        <taxon>Pseudomonadati</taxon>
        <taxon>Pseudomonadota</taxon>
        <taxon>Gammaproteobacteria</taxon>
        <taxon>Enterobacterales</taxon>
        <taxon>Enterobacteriaceae</taxon>
        <taxon>Shigella</taxon>
    </lineage>
</organism>
<protein>
    <recommendedName>
        <fullName evidence="2">GTP cyclohydrolase 1</fullName>
        <ecNumber evidence="2">3.5.4.16</ecNumber>
    </recommendedName>
    <alternativeName>
        <fullName evidence="2">GTP cyclohydrolase I</fullName>
        <shortName evidence="2">GTP-CH-I</shortName>
    </alternativeName>
</protein>
<reference key="1">
    <citation type="journal article" date="2005" name="Nucleic Acids Res.">
        <title>Genome dynamics and diversity of Shigella species, the etiologic agents of bacillary dysentery.</title>
        <authorList>
            <person name="Yang F."/>
            <person name="Yang J."/>
            <person name="Zhang X."/>
            <person name="Chen L."/>
            <person name="Jiang Y."/>
            <person name="Yan Y."/>
            <person name="Tang X."/>
            <person name="Wang J."/>
            <person name="Xiong Z."/>
            <person name="Dong J."/>
            <person name="Xue Y."/>
            <person name="Zhu Y."/>
            <person name="Xu X."/>
            <person name="Sun L."/>
            <person name="Chen S."/>
            <person name="Nie H."/>
            <person name="Peng J."/>
            <person name="Xu J."/>
            <person name="Wang Y."/>
            <person name="Yuan Z."/>
            <person name="Wen Y."/>
            <person name="Yao Z."/>
            <person name="Shen Y."/>
            <person name="Qiang B."/>
            <person name="Hou Y."/>
            <person name="Yu J."/>
            <person name="Jin Q."/>
        </authorList>
    </citation>
    <scope>NUCLEOTIDE SEQUENCE [LARGE SCALE GENOMIC DNA]</scope>
    <source>
        <strain>Sb227</strain>
    </source>
</reference>
<accession>Q31YW1</accession>